<comment type="function">
    <text evidence="4">Exoglycosidase that cleaves the single beta-linked mannose residue from the non-reducing end of all N-linked glycoprotein oligosaccharides.</text>
</comment>
<comment type="catalytic activity">
    <reaction evidence="7 8">
        <text>Hydrolysis of terminal, non-reducing beta-D-mannose residues in beta-D-mannosides.</text>
        <dbReference type="EC" id="3.2.1.25"/>
    </reaction>
</comment>
<comment type="biophysicochemical properties">
    <phDependence>
        <text evidence="4">Optimum pH is 5.</text>
    </phDependence>
</comment>
<comment type="pathway">
    <text evidence="4">Glycan metabolism; N-glycan degradation.</text>
</comment>
<comment type="subunit">
    <text evidence="1">Monomer.</text>
</comment>
<comment type="subcellular location">
    <subcellularLocation>
        <location evidence="8">Lysosome</location>
    </subcellularLocation>
</comment>
<comment type="tissue specificity">
    <text evidence="3">Detected in kidney (at protein level) (PubMed:1556126). Found in spleen and to a lesser extent in liver. Not detected in kidney or brain.</text>
</comment>
<comment type="PTM">
    <text evidence="3">N-glycosylated.</text>
</comment>
<comment type="disease">
    <text evidence="4 5">Defects in MANBA cause beta-mannosidosis, a severe disorder that affects peripheral and central nervous system myelin resulting in tremor, nystagmus, ataxia and early death. The primary storage products associated with the enzyme deficiency are the trisaccharide Man-beta-1-4-GlcNAc-beta-1-4-GlcNAc and the disaccharide Man-beta-1-4-GlcNAc.</text>
</comment>
<comment type="similarity">
    <text evidence="6">Belongs to the glycosyl hydrolase 2 family.</text>
</comment>
<accession>Q95327</accession>
<organism>
    <name type="scientific">Capra hircus</name>
    <name type="common">Goat</name>
    <dbReference type="NCBI Taxonomy" id="9925"/>
    <lineage>
        <taxon>Eukaryota</taxon>
        <taxon>Metazoa</taxon>
        <taxon>Chordata</taxon>
        <taxon>Craniata</taxon>
        <taxon>Vertebrata</taxon>
        <taxon>Euteleostomi</taxon>
        <taxon>Mammalia</taxon>
        <taxon>Eutheria</taxon>
        <taxon>Laurasiatheria</taxon>
        <taxon>Artiodactyla</taxon>
        <taxon>Ruminantia</taxon>
        <taxon>Pecora</taxon>
        <taxon>Bovidae</taxon>
        <taxon>Caprinae</taxon>
        <taxon>Capra</taxon>
    </lineage>
</organism>
<proteinExistence type="evidence at protein level"/>
<protein>
    <recommendedName>
        <fullName>Beta-mannosidase</fullName>
        <ecNumber evidence="7 8">3.2.1.25</ecNumber>
    </recommendedName>
    <alternativeName>
        <fullName>Lysosomal beta A mannosidase</fullName>
    </alternativeName>
    <alternativeName>
        <fullName>Mannanase</fullName>
        <shortName>Mannase</shortName>
    </alternativeName>
</protein>
<evidence type="ECO:0000250" key="1">
    <source>
        <dbReference type="UniProtKB" id="Q8K2I4"/>
    </source>
</evidence>
<evidence type="ECO:0000255" key="2"/>
<evidence type="ECO:0000269" key="3">
    <source>
    </source>
</evidence>
<evidence type="ECO:0000269" key="4">
    <source>
    </source>
</evidence>
<evidence type="ECO:0000269" key="5">
    <source>
    </source>
</evidence>
<evidence type="ECO:0000305" key="6"/>
<evidence type="ECO:0000305" key="7">
    <source>
    </source>
</evidence>
<evidence type="ECO:0000305" key="8">
    <source>
    </source>
</evidence>
<dbReference type="EC" id="3.2.1.25" evidence="7 8"/>
<dbReference type="EMBL" id="U46067">
    <property type="protein sequence ID" value="AAC48665.1"/>
    <property type="molecule type" value="mRNA"/>
</dbReference>
<dbReference type="RefSeq" id="NP_001272620.1">
    <property type="nucleotide sequence ID" value="NM_001285691.1"/>
</dbReference>
<dbReference type="SMR" id="Q95327"/>
<dbReference type="STRING" id="9925.ENSCHIP00000023174"/>
<dbReference type="CAZy" id="GH2">
    <property type="family name" value="Glycoside Hydrolase Family 2"/>
</dbReference>
<dbReference type="GlyCosmos" id="Q95327">
    <property type="glycosylation" value="4 sites, No reported glycans"/>
</dbReference>
<dbReference type="GeneID" id="100750234"/>
<dbReference type="KEGG" id="chx:100750234"/>
<dbReference type="CTD" id="4126"/>
<dbReference type="OrthoDB" id="2866996at2759"/>
<dbReference type="BRENDA" id="3.2.1.25">
    <property type="organism ID" value="1166"/>
</dbReference>
<dbReference type="UniPathway" id="UPA00280"/>
<dbReference type="Proteomes" id="UP000291000">
    <property type="component" value="Unassembled WGS sequence"/>
</dbReference>
<dbReference type="Proteomes" id="UP000694566">
    <property type="component" value="Unplaced"/>
</dbReference>
<dbReference type="GO" id="GO:0005764">
    <property type="term" value="C:lysosome"/>
    <property type="evidence" value="ECO:0007669"/>
    <property type="project" value="UniProtKB-SubCell"/>
</dbReference>
<dbReference type="GO" id="GO:0004567">
    <property type="term" value="F:beta-mannosidase activity"/>
    <property type="evidence" value="ECO:0000250"/>
    <property type="project" value="UniProtKB"/>
</dbReference>
<dbReference type="GO" id="GO:0005975">
    <property type="term" value="P:carbohydrate metabolic process"/>
    <property type="evidence" value="ECO:0007669"/>
    <property type="project" value="InterPro"/>
</dbReference>
<dbReference type="GO" id="GO:0006516">
    <property type="term" value="P:glycoprotein catabolic process"/>
    <property type="evidence" value="ECO:0000250"/>
    <property type="project" value="UniProtKB"/>
</dbReference>
<dbReference type="FunFam" id="2.60.40.10:FF:000650">
    <property type="entry name" value="Mannosidase beta"/>
    <property type="match status" value="1"/>
</dbReference>
<dbReference type="FunFam" id="2.60.40.10:FF:000781">
    <property type="entry name" value="Mannosidase beta"/>
    <property type="match status" value="1"/>
</dbReference>
<dbReference type="FunFam" id="3.20.20.80:FF:000035">
    <property type="entry name" value="Mannosidase beta"/>
    <property type="match status" value="1"/>
</dbReference>
<dbReference type="FunFam" id="2.60.120.260:FF:000060">
    <property type="entry name" value="Probable beta-mannosidase"/>
    <property type="match status" value="1"/>
</dbReference>
<dbReference type="Gene3D" id="2.60.120.260">
    <property type="entry name" value="Galactose-binding domain-like"/>
    <property type="match status" value="1"/>
</dbReference>
<dbReference type="Gene3D" id="3.20.20.80">
    <property type="entry name" value="Glycosidases"/>
    <property type="match status" value="1"/>
</dbReference>
<dbReference type="Gene3D" id="2.60.40.10">
    <property type="entry name" value="Immunoglobulins"/>
    <property type="match status" value="3"/>
</dbReference>
<dbReference type="InterPro" id="IPR036156">
    <property type="entry name" value="Beta-gal/glucu_dom_sf"/>
</dbReference>
<dbReference type="InterPro" id="IPR054593">
    <property type="entry name" value="Beta-mannosidase-like_N2"/>
</dbReference>
<dbReference type="InterPro" id="IPR050887">
    <property type="entry name" value="Beta-mannosidase_GH2"/>
</dbReference>
<dbReference type="InterPro" id="IPR041625">
    <property type="entry name" value="Beta-mannosidase_Ig"/>
</dbReference>
<dbReference type="InterPro" id="IPR008979">
    <property type="entry name" value="Galactose-bd-like_sf"/>
</dbReference>
<dbReference type="InterPro" id="IPR006103">
    <property type="entry name" value="Glyco_hydro_2_cat"/>
</dbReference>
<dbReference type="InterPro" id="IPR017853">
    <property type="entry name" value="Glycoside_hydrolase_SF"/>
</dbReference>
<dbReference type="InterPro" id="IPR013783">
    <property type="entry name" value="Ig-like_fold"/>
</dbReference>
<dbReference type="InterPro" id="IPR041447">
    <property type="entry name" value="Mannosidase_ig"/>
</dbReference>
<dbReference type="PANTHER" id="PTHR43730">
    <property type="entry name" value="BETA-MANNOSIDASE"/>
    <property type="match status" value="1"/>
</dbReference>
<dbReference type="PANTHER" id="PTHR43730:SF1">
    <property type="entry name" value="BETA-MANNOSIDASE"/>
    <property type="match status" value="1"/>
</dbReference>
<dbReference type="Pfam" id="PF02836">
    <property type="entry name" value="Glyco_hydro_2_C"/>
    <property type="match status" value="1"/>
</dbReference>
<dbReference type="Pfam" id="PF22666">
    <property type="entry name" value="Glyco_hydro_2_N2"/>
    <property type="match status" value="1"/>
</dbReference>
<dbReference type="Pfam" id="PF17753">
    <property type="entry name" value="Ig_mannosidase"/>
    <property type="match status" value="1"/>
</dbReference>
<dbReference type="Pfam" id="PF17786">
    <property type="entry name" value="Mannosidase_ig"/>
    <property type="match status" value="1"/>
</dbReference>
<dbReference type="SUPFAM" id="SSF51445">
    <property type="entry name" value="(Trans)glycosidases"/>
    <property type="match status" value="1"/>
</dbReference>
<dbReference type="SUPFAM" id="SSF49303">
    <property type="entry name" value="beta-Galactosidase/glucuronidase domain"/>
    <property type="match status" value="3"/>
</dbReference>
<dbReference type="SUPFAM" id="SSF49785">
    <property type="entry name" value="Galactose-binding domain-like"/>
    <property type="match status" value="1"/>
</dbReference>
<keyword id="KW-1015">Disulfide bond</keyword>
<keyword id="KW-0325">Glycoprotein</keyword>
<keyword id="KW-0326">Glycosidase</keyword>
<keyword id="KW-0378">Hydrolase</keyword>
<keyword id="KW-0458">Lysosome</keyword>
<keyword id="KW-1185">Reference proteome</keyword>
<keyword id="KW-0732">Signal</keyword>
<gene>
    <name type="primary">MANBA</name>
</gene>
<name>MANBA_CAPHI</name>
<reference key="1">
    <citation type="journal article" date="1996" name="Genomics">
        <title>Caprine beta-mannosidase: sequencing and characterization of the cDNA and identification of the molecular defect of caprine beta-mannosidosis.</title>
        <authorList>
            <person name="Leipprandt J.R."/>
            <person name="Kraemer S.A."/>
            <person name="Haithcock B.E."/>
            <person name="Chen H."/>
            <person name="Dyme J.L."/>
            <person name="Cavanagh K.T."/>
            <person name="Friderici K.H."/>
            <person name="Jones M.Z."/>
        </authorList>
    </citation>
    <scope>NUCLEOTIDE SEQUENCE [MRNA]</scope>
    <scope>DISEASE</scope>
    <source>
        <tissue>Kidney</tissue>
    </source>
</reference>
<reference key="2">
    <citation type="journal article" date="1981" name="J. Biol. Chem.">
        <title>Caprine beta-mannosidosis. Inherited deficiency of beta-D-mannosidase.</title>
        <authorList>
            <person name="Jones M.Z."/>
            <person name="Dawson G."/>
        </authorList>
    </citation>
    <scope>FUNCTION</scope>
    <scope>CATALYTIC ACTIVITY</scope>
    <scope>PATHWAY</scope>
    <scope>DISEASE</scope>
    <scope>SUBCELLULAR LOCATION</scope>
    <scope>BIOPHYSICOCHEMICAL PROPERTIES</scope>
</reference>
<reference key="3">
    <citation type="journal article" date="1992" name="J. Biol. Chem.">
        <title>Purification and characterization of goat lysosomal beta-mannosidase using monoclonal and polyclonal antibodies.</title>
        <authorList>
            <person name="Sopher B.L."/>
            <person name="Traviss C.E."/>
            <person name="Cavanagh K.T."/>
            <person name="Jones M.Z."/>
            <person name="Friderici K.H."/>
        </authorList>
    </citation>
    <scope>CATALYTIC ACTIVITY</scope>
    <scope>GLYCOSYLATION</scope>
    <scope>TISSUE SPECIFICITY</scope>
</reference>
<feature type="signal peptide" evidence="2">
    <location>
        <begin position="1"/>
        <end position="17"/>
    </location>
</feature>
<feature type="chain" id="PRO_0000012165" description="Beta-mannosidase">
    <location>
        <begin position="18"/>
        <end position="879"/>
    </location>
</feature>
<feature type="active site" description="Proton donor" evidence="1">
    <location>
        <position position="457"/>
    </location>
</feature>
<feature type="active site" description="Nucleophile" evidence="1">
    <location>
        <position position="554"/>
    </location>
</feature>
<feature type="binding site" evidence="1">
    <location>
        <begin position="190"/>
        <end position="192"/>
    </location>
    <ligand>
        <name>substrate</name>
    </ligand>
</feature>
<feature type="binding site" evidence="1">
    <location>
        <position position="456"/>
    </location>
    <ligand>
        <name>substrate</name>
    </ligand>
</feature>
<feature type="glycosylation site" description="N-linked (GlcNAc...) asparagine" evidence="2">
    <location>
        <position position="35"/>
    </location>
</feature>
<feature type="glycosylation site" description="N-linked (GlcNAc...) asparagine" evidence="2">
    <location>
        <position position="77"/>
    </location>
</feature>
<feature type="glycosylation site" description="N-linked (GlcNAc...) asparagine" evidence="2">
    <location>
        <position position="297"/>
    </location>
</feature>
<feature type="glycosylation site" description="N-linked (GlcNAc...) asparagine" evidence="2">
    <location>
        <position position="803"/>
    </location>
</feature>
<feature type="disulfide bond" evidence="1">
    <location>
        <begin position="167"/>
        <end position="176"/>
    </location>
</feature>
<feature type="disulfide bond" evidence="1">
    <location>
        <begin position="540"/>
        <end position="629"/>
    </location>
</feature>
<feature type="disulfide bond" evidence="1">
    <location>
        <begin position="732"/>
        <end position="761"/>
    </location>
</feature>
<feature type="disulfide bond" evidence="1">
    <location>
        <begin position="764"/>
        <end position="769"/>
    </location>
</feature>
<feature type="sequence variant">
    <original>R</original>
    <variation>Q</variation>
    <location>
        <position position="56"/>
    </location>
</feature>
<feature type="sequence variant">
    <original>T</original>
    <variation>S</variation>
    <location>
        <position position="340"/>
    </location>
</feature>
<sequence>MLLRLLLLLAPCGAGFATEVVSISLRGNWKIHNGNGSLQLPAAVPGCVHSALFNKRIIKDPYYRFNNLDYRWIALDNWTYIKKFKLHSDMSEWNKVNLVFEGIDTVAVVLLNSVPIGKTDNMFRRYSFDITHMVKAVNIIEVRFQSPVIYANQRSERHTAYWVPPNCPPPVQDGECHVNFIRKMQCSFGWDWGPSFPTQGIWKDVRIEAYNICHLNYFMFTPIYDNYMETWNLKIESSFDVVSSKLVSGEAIVAIPELNIQQRNNIELRHGERTVKLFVKIDKAVIVETWWPHGHGNQTGYDMTVTFELDGGLRFEKSAKVYFRTVELVEEPIQNSPGLTFYFKINGLPIFLKGSNWIPADSFQDRVTSDMLRLLLQSVVDANMNALRVWGGGIYEQDEFYELCDELGIMIWQDFMFACALYPTDEDFMDSVREEVTHQVRRLKSHPSIITWSGNNENEAALMMGWYDTKPGYLHTYIKDYVTLYVKNIRTIVLEGDQTRPFIISSPTNGAKTTAEGWLSPNPYDLNYGDVHFYDYMSDCWNWRTFPKARFVSEYGYQSWPSFSTLEKVSSEEDWSYESSFALHRQHLINGNSEMLQQIELHFKLPNSADQLRRFKDTLYLTQVMQAQCVKTETEFYRRSRNEIVDGKGHTMGALYWQLNDIWQAPSWSSLEYGGKWKMLHYFARRFFAPLLPVGFEDKDVLFIYGVSDLPSDHQMMLTVRVHTWSSLELVCSELTNPFVMKAGESVVLYSKPVPELLKGCPGCTRQSCVVSFYLSTDGELLSPINYHFLSSLKNAKGLHKANITATISQQGNTFVFDLKTSAVAPFVWLDVGSIPGRFSDNGFLMTEKTRTVFFYPWKPTSKSELEQSFHVTSLADTY</sequence>